<comment type="function">
    <text evidence="1">Involved in control of chromosome replication initiation. Inhibits the cooperative binding of DnaA to the oriC region, thus negatively regulating initiation of chromosome replication. Inhibits the ability of DnaA-ATP to form a helix on DNA; does not disassemble preformed DnaA-DNA helices. Decreases the residence time of DnaA on the chromosome at its binding sites (oriC, replication forks and promoter-binding sites). Tethers DnaA to the replication machinery via the DNA polymerase beta sliding clamp subunit (dnaN). Associates with oriC and other DnaA targets on the chromosome in a DnaA-dependent manner.</text>
</comment>
<comment type="cofactor">
    <cofactor evidence="1">
        <name>Zn(2+)</name>
        <dbReference type="ChEBI" id="CHEBI:29105"/>
    </cofactor>
    <text evidence="1">Binds 1 zinc ion per subunit.</text>
</comment>
<comment type="subunit">
    <text evidence="1">Homotetramer. Interacts with both DnaA and DnaN, acting as a bridge between these two proteins.</text>
</comment>
<comment type="subcellular location">
    <subcellularLocation>
        <location evidence="1">Cytoplasm</location>
        <location evidence="1">Nucleoid</location>
    </subcellularLocation>
    <text evidence="1">Localizes in tight foci, which correspond to the replisome at mid-cell throughout the cell cycle.</text>
</comment>
<comment type="similarity">
    <text evidence="1">Belongs to the YabA family.</text>
</comment>
<keyword id="KW-0963">Cytoplasm</keyword>
<keyword id="KW-0235">DNA replication</keyword>
<keyword id="KW-0236">DNA replication inhibitor</keyword>
<keyword id="KW-0479">Metal-binding</keyword>
<keyword id="KW-1185">Reference proteome</keyword>
<keyword id="KW-0862">Zinc</keyword>
<accession>Q5HRR9</accession>
<organism>
    <name type="scientific">Staphylococcus epidermidis (strain ATCC 35984 / DSM 28319 / BCRC 17069 / CCUG 31568 / BM 3577 / RP62A)</name>
    <dbReference type="NCBI Taxonomy" id="176279"/>
    <lineage>
        <taxon>Bacteria</taxon>
        <taxon>Bacillati</taxon>
        <taxon>Bacillota</taxon>
        <taxon>Bacilli</taxon>
        <taxon>Bacillales</taxon>
        <taxon>Staphylococcaceae</taxon>
        <taxon>Staphylococcus</taxon>
    </lineage>
</organism>
<name>YABA_STAEQ</name>
<reference key="1">
    <citation type="journal article" date="2005" name="J. Bacteriol.">
        <title>Insights on evolution of virulence and resistance from the complete genome analysis of an early methicillin-resistant Staphylococcus aureus strain and a biofilm-producing methicillin-resistant Staphylococcus epidermidis strain.</title>
        <authorList>
            <person name="Gill S.R."/>
            <person name="Fouts D.E."/>
            <person name="Archer G.L."/>
            <person name="Mongodin E.F."/>
            <person name="DeBoy R.T."/>
            <person name="Ravel J."/>
            <person name="Paulsen I.T."/>
            <person name="Kolonay J.F."/>
            <person name="Brinkac L.M."/>
            <person name="Beanan M.J."/>
            <person name="Dodson R.J."/>
            <person name="Daugherty S.C."/>
            <person name="Madupu R."/>
            <person name="Angiuoli S.V."/>
            <person name="Durkin A.S."/>
            <person name="Haft D.H."/>
            <person name="Vamathevan J.J."/>
            <person name="Khouri H."/>
            <person name="Utterback T.R."/>
            <person name="Lee C."/>
            <person name="Dimitrov G."/>
            <person name="Jiang L."/>
            <person name="Qin H."/>
            <person name="Weidman J."/>
            <person name="Tran K."/>
            <person name="Kang K.H."/>
            <person name="Hance I.R."/>
            <person name="Nelson K.E."/>
            <person name="Fraser C.M."/>
        </authorList>
    </citation>
    <scope>NUCLEOTIDE SEQUENCE [LARGE SCALE GENOMIC DNA]</scope>
    <source>
        <strain>ATCC 35984 / DSM 28319 / BCRC 17069 / CCUG 31568 / BM 3577 / RP62A</strain>
    </source>
</reference>
<dbReference type="EMBL" id="CP000029">
    <property type="protein sequence ID" value="AAW53461.1"/>
    <property type="molecule type" value="Genomic_DNA"/>
</dbReference>
<dbReference type="RefSeq" id="WP_001832238.1">
    <property type="nucleotide sequence ID" value="NC_002976.3"/>
</dbReference>
<dbReference type="SMR" id="Q5HRR9"/>
<dbReference type="STRING" id="176279.SERP0124"/>
<dbReference type="GeneID" id="50019603"/>
<dbReference type="KEGG" id="ser:SERP0124"/>
<dbReference type="eggNOG" id="COG4467">
    <property type="taxonomic scope" value="Bacteria"/>
</dbReference>
<dbReference type="HOGENOM" id="CLU_157169_1_0_9"/>
<dbReference type="Proteomes" id="UP000000531">
    <property type="component" value="Chromosome"/>
</dbReference>
<dbReference type="GO" id="GO:0009295">
    <property type="term" value="C:nucleoid"/>
    <property type="evidence" value="ECO:0007669"/>
    <property type="project" value="UniProtKB-SubCell"/>
</dbReference>
<dbReference type="GO" id="GO:0006260">
    <property type="term" value="P:DNA replication"/>
    <property type="evidence" value="ECO:0007669"/>
    <property type="project" value="UniProtKB-UniRule"/>
</dbReference>
<dbReference type="HAMAP" id="MF_01159">
    <property type="entry name" value="YabA"/>
    <property type="match status" value="1"/>
</dbReference>
<dbReference type="InterPro" id="IPR010377">
    <property type="entry name" value="YabA"/>
</dbReference>
<dbReference type="NCBIfam" id="NF009641">
    <property type="entry name" value="PRK13169.1-2"/>
    <property type="match status" value="1"/>
</dbReference>
<dbReference type="Pfam" id="PF06156">
    <property type="entry name" value="YabA"/>
    <property type="match status" value="1"/>
</dbReference>
<dbReference type="PIRSF" id="PIRSF021439">
    <property type="entry name" value="DUF972"/>
    <property type="match status" value="1"/>
</dbReference>
<dbReference type="SUPFAM" id="SSF90257">
    <property type="entry name" value="Myosin rod fragments"/>
    <property type="match status" value="1"/>
</dbReference>
<evidence type="ECO:0000255" key="1">
    <source>
        <dbReference type="HAMAP-Rule" id="MF_01159"/>
    </source>
</evidence>
<feature type="chain" id="PRO_0000211922" description="Replication initiation control protein YabA">
    <location>
        <begin position="1"/>
        <end position="115"/>
    </location>
</feature>
<feature type="binding site" evidence="1">
    <location>
        <position position="90"/>
    </location>
    <ligand>
        <name>Zn(2+)</name>
        <dbReference type="ChEBI" id="CHEBI:29105"/>
    </ligand>
</feature>
<feature type="binding site" evidence="1">
    <location>
        <position position="92"/>
    </location>
    <ligand>
        <name>Zn(2+)</name>
        <dbReference type="ChEBI" id="CHEBI:29105"/>
    </ligand>
</feature>
<feature type="binding site" evidence="1">
    <location>
        <position position="106"/>
    </location>
    <ligand>
        <name>Zn(2+)</name>
        <dbReference type="ChEBI" id="CHEBI:29105"/>
    </ligand>
</feature>
<feature type="binding site" evidence="1">
    <location>
        <position position="109"/>
    </location>
    <ligand>
        <name>Zn(2+)</name>
        <dbReference type="ChEBI" id="CHEBI:29105"/>
    </ligand>
</feature>
<protein>
    <recommendedName>
        <fullName evidence="1">Replication initiation control protein YabA</fullName>
    </recommendedName>
</protein>
<gene>
    <name evidence="1" type="primary">yabA</name>
    <name type="ordered locus">SERP0124</name>
</gene>
<proteinExistence type="inferred from homology"/>
<sequence length="115" mass="13478">MNRNELFERLMKLEHHVEQLTTDMSELKDLTVELVEENVALQVENENLKRLMNKTEESVETHLDKDNYKHVKTPSPSKDNLAMLYREGFHICKGELFGKHRHGEDCLLCLNVLSD</sequence>